<dbReference type="EC" id="5.6.2.2" evidence="1"/>
<dbReference type="EMBL" id="AE016826">
    <property type="protein sequence ID" value="AAO26754.1"/>
    <property type="molecule type" value="Genomic_DNA"/>
</dbReference>
<dbReference type="RefSeq" id="WP_011091155.1">
    <property type="nucleotide sequence ID" value="NC_004545.1"/>
</dbReference>
<dbReference type="SMR" id="Q89B37"/>
<dbReference type="STRING" id="224915.bbp_010"/>
<dbReference type="KEGG" id="bab:bbp_010"/>
<dbReference type="eggNOG" id="COG0187">
    <property type="taxonomic scope" value="Bacteria"/>
</dbReference>
<dbReference type="HOGENOM" id="CLU_006146_0_1_6"/>
<dbReference type="OrthoDB" id="9802808at2"/>
<dbReference type="Proteomes" id="UP000000601">
    <property type="component" value="Chromosome"/>
</dbReference>
<dbReference type="GO" id="GO:0005694">
    <property type="term" value="C:chromosome"/>
    <property type="evidence" value="ECO:0007669"/>
    <property type="project" value="InterPro"/>
</dbReference>
<dbReference type="GO" id="GO:0005737">
    <property type="term" value="C:cytoplasm"/>
    <property type="evidence" value="ECO:0007669"/>
    <property type="project" value="UniProtKB-SubCell"/>
</dbReference>
<dbReference type="GO" id="GO:0005524">
    <property type="term" value="F:ATP binding"/>
    <property type="evidence" value="ECO:0007669"/>
    <property type="project" value="UniProtKB-UniRule"/>
</dbReference>
<dbReference type="GO" id="GO:0003677">
    <property type="term" value="F:DNA binding"/>
    <property type="evidence" value="ECO:0007669"/>
    <property type="project" value="UniProtKB-KW"/>
</dbReference>
<dbReference type="GO" id="GO:0003918">
    <property type="term" value="F:DNA topoisomerase type II (double strand cut, ATP-hydrolyzing) activity"/>
    <property type="evidence" value="ECO:0007669"/>
    <property type="project" value="UniProtKB-UniRule"/>
</dbReference>
<dbReference type="GO" id="GO:0046872">
    <property type="term" value="F:metal ion binding"/>
    <property type="evidence" value="ECO:0007669"/>
    <property type="project" value="UniProtKB-KW"/>
</dbReference>
<dbReference type="GO" id="GO:0006265">
    <property type="term" value="P:DNA topological change"/>
    <property type="evidence" value="ECO:0007669"/>
    <property type="project" value="UniProtKB-UniRule"/>
</dbReference>
<dbReference type="GO" id="GO:0006261">
    <property type="term" value="P:DNA-templated DNA replication"/>
    <property type="evidence" value="ECO:0007669"/>
    <property type="project" value="UniProtKB-UniRule"/>
</dbReference>
<dbReference type="CDD" id="cd16928">
    <property type="entry name" value="HATPase_GyrB-like"/>
    <property type="match status" value="1"/>
</dbReference>
<dbReference type="CDD" id="cd00822">
    <property type="entry name" value="TopoII_Trans_DNA_gyrase"/>
    <property type="match status" value="1"/>
</dbReference>
<dbReference type="CDD" id="cd03366">
    <property type="entry name" value="TOPRIM_TopoIIA_GyrB"/>
    <property type="match status" value="1"/>
</dbReference>
<dbReference type="FunFam" id="3.30.230.10:FF:000005">
    <property type="entry name" value="DNA gyrase subunit B"/>
    <property type="match status" value="1"/>
</dbReference>
<dbReference type="FunFam" id="3.30.565.10:FF:000002">
    <property type="entry name" value="DNA gyrase subunit B"/>
    <property type="match status" value="1"/>
</dbReference>
<dbReference type="FunFam" id="3.40.50.670:FF:000001">
    <property type="entry name" value="DNA topoisomerase 2"/>
    <property type="match status" value="1"/>
</dbReference>
<dbReference type="Gene3D" id="3.10.20.690">
    <property type="match status" value="1"/>
</dbReference>
<dbReference type="Gene3D" id="3.30.230.10">
    <property type="match status" value="1"/>
</dbReference>
<dbReference type="Gene3D" id="3.40.50.670">
    <property type="match status" value="2"/>
</dbReference>
<dbReference type="Gene3D" id="3.30.565.10">
    <property type="entry name" value="Histidine kinase-like ATPase, C-terminal domain"/>
    <property type="match status" value="1"/>
</dbReference>
<dbReference type="HAMAP" id="MF_01898">
    <property type="entry name" value="GyrB"/>
    <property type="match status" value="1"/>
</dbReference>
<dbReference type="InterPro" id="IPR002288">
    <property type="entry name" value="DNA_gyrase_B_C"/>
</dbReference>
<dbReference type="InterPro" id="IPR011557">
    <property type="entry name" value="GyrB"/>
</dbReference>
<dbReference type="InterPro" id="IPR049353">
    <property type="entry name" value="GyrB_hook"/>
</dbReference>
<dbReference type="InterPro" id="IPR041423">
    <property type="entry name" value="GyrB_insert"/>
</dbReference>
<dbReference type="InterPro" id="IPR036890">
    <property type="entry name" value="HATPase_C_sf"/>
</dbReference>
<dbReference type="InterPro" id="IPR020568">
    <property type="entry name" value="Ribosomal_Su5_D2-typ_SF"/>
</dbReference>
<dbReference type="InterPro" id="IPR014721">
    <property type="entry name" value="Ribsml_uS5_D2-typ_fold_subgr"/>
</dbReference>
<dbReference type="InterPro" id="IPR001241">
    <property type="entry name" value="Topo_IIA"/>
</dbReference>
<dbReference type="InterPro" id="IPR013760">
    <property type="entry name" value="Topo_IIA-like_dom_sf"/>
</dbReference>
<dbReference type="InterPro" id="IPR000565">
    <property type="entry name" value="Topo_IIA_B"/>
</dbReference>
<dbReference type="InterPro" id="IPR013759">
    <property type="entry name" value="Topo_IIA_B_C"/>
</dbReference>
<dbReference type="InterPro" id="IPR013506">
    <property type="entry name" value="Topo_IIA_bsu_dom2"/>
</dbReference>
<dbReference type="InterPro" id="IPR018522">
    <property type="entry name" value="TopoIIA_CS"/>
</dbReference>
<dbReference type="InterPro" id="IPR006171">
    <property type="entry name" value="TOPRIM_dom"/>
</dbReference>
<dbReference type="InterPro" id="IPR034160">
    <property type="entry name" value="TOPRIM_GyrB"/>
</dbReference>
<dbReference type="NCBIfam" id="TIGR01059">
    <property type="entry name" value="gyrB"/>
    <property type="match status" value="1"/>
</dbReference>
<dbReference type="NCBIfam" id="NF004189">
    <property type="entry name" value="PRK05644.1"/>
    <property type="match status" value="1"/>
</dbReference>
<dbReference type="NCBIfam" id="NF011501">
    <property type="entry name" value="PRK14939.1"/>
    <property type="match status" value="1"/>
</dbReference>
<dbReference type="PANTHER" id="PTHR45866:SF1">
    <property type="entry name" value="DNA GYRASE SUBUNIT B, MITOCHONDRIAL"/>
    <property type="match status" value="1"/>
</dbReference>
<dbReference type="PANTHER" id="PTHR45866">
    <property type="entry name" value="DNA GYRASE/TOPOISOMERASE SUBUNIT B"/>
    <property type="match status" value="1"/>
</dbReference>
<dbReference type="Pfam" id="PF00204">
    <property type="entry name" value="DNA_gyraseB"/>
    <property type="match status" value="1"/>
</dbReference>
<dbReference type="Pfam" id="PF00986">
    <property type="entry name" value="DNA_gyraseB_C"/>
    <property type="match status" value="1"/>
</dbReference>
<dbReference type="Pfam" id="PF21249">
    <property type="entry name" value="GyrB_hook"/>
    <property type="match status" value="1"/>
</dbReference>
<dbReference type="Pfam" id="PF18053">
    <property type="entry name" value="GyrB_insert"/>
    <property type="match status" value="1"/>
</dbReference>
<dbReference type="Pfam" id="PF02518">
    <property type="entry name" value="HATPase_c"/>
    <property type="match status" value="1"/>
</dbReference>
<dbReference type="Pfam" id="PF01751">
    <property type="entry name" value="Toprim"/>
    <property type="match status" value="1"/>
</dbReference>
<dbReference type="PRINTS" id="PR01159">
    <property type="entry name" value="DNAGYRASEB"/>
</dbReference>
<dbReference type="PRINTS" id="PR00418">
    <property type="entry name" value="TPI2FAMILY"/>
</dbReference>
<dbReference type="SMART" id="SM00387">
    <property type="entry name" value="HATPase_c"/>
    <property type="match status" value="1"/>
</dbReference>
<dbReference type="SMART" id="SM00433">
    <property type="entry name" value="TOP2c"/>
    <property type="match status" value="1"/>
</dbReference>
<dbReference type="SUPFAM" id="SSF55874">
    <property type="entry name" value="ATPase domain of HSP90 chaperone/DNA topoisomerase II/histidine kinase"/>
    <property type="match status" value="1"/>
</dbReference>
<dbReference type="SUPFAM" id="SSF54211">
    <property type="entry name" value="Ribosomal protein S5 domain 2-like"/>
    <property type="match status" value="1"/>
</dbReference>
<dbReference type="SUPFAM" id="SSF56719">
    <property type="entry name" value="Type II DNA topoisomerase"/>
    <property type="match status" value="1"/>
</dbReference>
<dbReference type="PROSITE" id="PS00177">
    <property type="entry name" value="TOPOISOMERASE_II"/>
    <property type="match status" value="1"/>
</dbReference>
<dbReference type="PROSITE" id="PS50880">
    <property type="entry name" value="TOPRIM"/>
    <property type="match status" value="1"/>
</dbReference>
<accession>Q89B37</accession>
<reference key="1">
    <citation type="journal article" date="2003" name="Proc. Natl. Acad. Sci. U.S.A.">
        <title>Reductive genome evolution in Buchnera aphidicola.</title>
        <authorList>
            <person name="van Ham R.C.H.J."/>
            <person name="Kamerbeek J."/>
            <person name="Palacios C."/>
            <person name="Rausell C."/>
            <person name="Abascal F."/>
            <person name="Bastolla U."/>
            <person name="Fernandez J.M."/>
            <person name="Jimenez L."/>
            <person name="Postigo M."/>
            <person name="Silva F.J."/>
            <person name="Tamames J."/>
            <person name="Viguera E."/>
            <person name="Latorre A."/>
            <person name="Valencia A."/>
            <person name="Moran F."/>
            <person name="Moya A."/>
        </authorList>
    </citation>
    <scope>NUCLEOTIDE SEQUENCE [LARGE SCALE GENOMIC DNA]</scope>
    <source>
        <strain>Bp</strain>
    </source>
</reference>
<proteinExistence type="inferred from homology"/>
<evidence type="ECO:0000255" key="1">
    <source>
        <dbReference type="HAMAP-Rule" id="MF_01898"/>
    </source>
</evidence>
<keyword id="KW-0067">ATP-binding</keyword>
<keyword id="KW-0963">Cytoplasm</keyword>
<keyword id="KW-0238">DNA-binding</keyword>
<keyword id="KW-0413">Isomerase</keyword>
<keyword id="KW-0460">Magnesium</keyword>
<keyword id="KW-0479">Metal-binding</keyword>
<keyword id="KW-0547">Nucleotide-binding</keyword>
<keyword id="KW-1185">Reference proteome</keyword>
<keyword id="KW-0799">Topoisomerase</keyword>
<gene>
    <name evidence="1" type="primary">gyrB</name>
    <name type="ordered locus">bbp_010</name>
</gene>
<feature type="chain" id="PRO_0000145300" description="DNA gyrase subunit B">
    <location>
        <begin position="1"/>
        <end position="804"/>
    </location>
</feature>
<feature type="domain" description="Toprim" evidence="1">
    <location>
        <begin position="418"/>
        <end position="533"/>
    </location>
</feature>
<feature type="binding site" evidence="1">
    <location>
        <position position="424"/>
    </location>
    <ligand>
        <name>Mg(2+)</name>
        <dbReference type="ChEBI" id="CHEBI:18420"/>
        <label>1</label>
        <note>catalytic</note>
    </ligand>
</feature>
<feature type="binding site" evidence="1">
    <location>
        <position position="498"/>
    </location>
    <ligand>
        <name>Mg(2+)</name>
        <dbReference type="ChEBI" id="CHEBI:18420"/>
        <label>1</label>
        <note>catalytic</note>
    </ligand>
</feature>
<feature type="binding site" evidence="1">
    <location>
        <position position="498"/>
    </location>
    <ligand>
        <name>Mg(2+)</name>
        <dbReference type="ChEBI" id="CHEBI:18420"/>
        <label>2</label>
    </ligand>
</feature>
<feature type="binding site" evidence="1">
    <location>
        <position position="500"/>
    </location>
    <ligand>
        <name>Mg(2+)</name>
        <dbReference type="ChEBI" id="CHEBI:18420"/>
        <label>2</label>
    </ligand>
</feature>
<feature type="site" description="Interaction with DNA" evidence="1">
    <location>
        <position position="449"/>
    </location>
</feature>
<feature type="site" description="Interaction with DNA" evidence="1">
    <location>
        <position position="452"/>
    </location>
</feature>
<name>GYRB_BUCBP</name>
<protein>
    <recommendedName>
        <fullName evidence="1">DNA gyrase subunit B</fullName>
        <ecNumber evidence="1">5.6.2.2</ecNumber>
    </recommendedName>
</protein>
<comment type="function">
    <text evidence="1">A type II topoisomerase that negatively supercoils closed circular double-stranded (ds) DNA in an ATP-dependent manner to modulate DNA topology and maintain chromosomes in an underwound state. Negative supercoiling favors strand separation, and DNA replication, transcription, recombination and repair, all of which involve strand separation. Also able to catalyze the interconversion of other topological isomers of dsDNA rings, including catenanes and knotted rings. Type II topoisomerases break and join 2 DNA strands simultaneously in an ATP-dependent manner.</text>
</comment>
<comment type="catalytic activity">
    <reaction evidence="1">
        <text>ATP-dependent breakage, passage and rejoining of double-stranded DNA.</text>
        <dbReference type="EC" id="5.6.2.2"/>
    </reaction>
</comment>
<comment type="cofactor">
    <cofactor evidence="1">
        <name>Mg(2+)</name>
        <dbReference type="ChEBI" id="CHEBI:18420"/>
    </cofactor>
    <cofactor evidence="1">
        <name>Mn(2+)</name>
        <dbReference type="ChEBI" id="CHEBI:29035"/>
    </cofactor>
    <cofactor evidence="1">
        <name>Ca(2+)</name>
        <dbReference type="ChEBI" id="CHEBI:29108"/>
    </cofactor>
    <text evidence="1">Binds two Mg(2+) per subunit. The magnesium ions form salt bridges with both the protein and the DNA. Can also accept other divalent metal cations, such as Mn(2+) or Ca(2+).</text>
</comment>
<comment type="subunit">
    <text evidence="1">Heterotetramer, composed of two GyrA and two GyrB chains. In the heterotetramer, GyrA contains the active site tyrosine that forms a transient covalent intermediate with DNA, while GyrB binds cofactors and catalyzes ATP hydrolysis.</text>
</comment>
<comment type="subcellular location">
    <subcellularLocation>
        <location evidence="1">Cytoplasm</location>
    </subcellularLocation>
</comment>
<comment type="miscellaneous">
    <text evidence="1">Few gyrases are as efficient as E.coli at forming negative supercoils. Not all organisms have 2 type II topoisomerases; in organisms with a single type II topoisomerase this enzyme also has to decatenate newly replicated chromosomes.</text>
</comment>
<comment type="similarity">
    <text evidence="1">Belongs to the type II topoisomerase GyrB family.</text>
</comment>
<sequence length="804" mass="92732">MKNTYTSSNIKILKGLDAVKKRPGMYIGNTDDGTGLHHMVFEVVDNSIDEALAGFCKNIIVTIHDDNSISIQDDGRGIPTDIHDEEGISAAEVIMTVLHAGGKFDNTSYKVSGGLHGVGVSVVNALSKKLELFIYRDKKIYYQIYKNGYPKNTLSIIGYTKITGTKIRFWPNLEIFTNVTQFNWEILSKRLRELSFLNSNVSIYLDDAKKHINENFYQQGGLKEFIIYLNKNKKPIHSKIFYFSSKKNNVEVEIAMQWNKGFQENIYCYTNNIPQQDGGTHLSGFRSALTRTMNNYLDKEGYIKKNKINIIGDDTREGLTAIISIKINDPKFSSQTKNKLVSSEVKSALESLVNEFLMEFLLENPQESKNIVTKIIESSRVRNAARRAREMTRKKGTLDLIGLPGKLSDCQERDPALSEIYLVEGDSAGGSAKQARNRKNQAILPLKGKILNVEKARYEKMLSSQEVTTLITALGCGIGKNEYNPEKLRYHRIIIMTDADVDGSHIRTLLLTFFYRYMPEIIQRGYLYIAQPPLYKVTKNNKTRYIKDKNTMENYKLSTALENTILESNTDKEIKIKCNYTLKKIISEYKIIQTIFFKIKDNFPLNILNEMLYHPKLNNLNDEVYVNNWINNFVIQLQKKSSSTRNYSAHITFNSKDKIFEPLIKIQKNAEVKEYKFDITFINSYEYQKIYSLGKKLQEMIQKNIHIKKNNKTYSIKNFQKNFELLIQNSFKNVLIQRYKGLGEMNPEQLWKTTMNPETRRMLKITLHNIDTTNKLFNTLMGDSVEPRKLFIELYALKASNIDI</sequence>
<organism>
    <name type="scientific">Buchnera aphidicola subsp. Baizongia pistaciae (strain Bp)</name>
    <dbReference type="NCBI Taxonomy" id="224915"/>
    <lineage>
        <taxon>Bacteria</taxon>
        <taxon>Pseudomonadati</taxon>
        <taxon>Pseudomonadota</taxon>
        <taxon>Gammaproteobacteria</taxon>
        <taxon>Enterobacterales</taxon>
        <taxon>Erwiniaceae</taxon>
        <taxon>Buchnera</taxon>
    </lineage>
</organism>